<keyword id="KW-1185">Reference proteome</keyword>
<feature type="chain" id="PRO_0000384048" description="Lactate utilization protein A">
    <location>
        <begin position="1"/>
        <end position="239"/>
    </location>
</feature>
<sequence>MKVSLFVTCLIDLFYTEVGKATVELLERLGCKVDFPEAQTCCGQPAYNSGYVKEAKEAMKQMMRAFADADYVVTPSGSCAAMLKEYPHIFHGDPEWEAEAKRLAAKTYELTQFLVDVLKVEDVGASLHGRATYHTSCHMTRLLGVKDAPLRLLEHVKGLELVPLPNAHQCCGFGGTFSVKMGPISEQMVDEKIGHIEEAEADYLIGADCGCLLNIGGRIARLGKPIRVMHIAEVLNARN</sequence>
<gene>
    <name evidence="1" type="primary">lutA</name>
    <name type="ordered locus">GK0395</name>
</gene>
<reference key="1">
    <citation type="journal article" date="2004" name="Nucleic Acids Res.">
        <title>Thermoadaptation trait revealed by the genome sequence of thermophilic Geobacillus kaustophilus.</title>
        <authorList>
            <person name="Takami H."/>
            <person name="Takaki Y."/>
            <person name="Chee G.-J."/>
            <person name="Nishi S."/>
            <person name="Shimamura S."/>
            <person name="Suzuki H."/>
            <person name="Matsui S."/>
            <person name="Uchiyama I."/>
        </authorList>
    </citation>
    <scope>NUCLEOTIDE SEQUENCE [LARGE SCALE GENOMIC DNA]</scope>
    <source>
        <strain>HTA426</strain>
    </source>
</reference>
<organism>
    <name type="scientific">Geobacillus kaustophilus (strain HTA426)</name>
    <dbReference type="NCBI Taxonomy" id="235909"/>
    <lineage>
        <taxon>Bacteria</taxon>
        <taxon>Bacillati</taxon>
        <taxon>Bacillota</taxon>
        <taxon>Bacilli</taxon>
        <taxon>Bacillales</taxon>
        <taxon>Anoxybacillaceae</taxon>
        <taxon>Geobacillus</taxon>
        <taxon>Geobacillus thermoleovorans group</taxon>
    </lineage>
</organism>
<evidence type="ECO:0000255" key="1">
    <source>
        <dbReference type="HAMAP-Rule" id="MF_02105"/>
    </source>
</evidence>
<comment type="function">
    <text evidence="1">Is involved in L-lactate degradation and allows cells to grow with lactate as the sole carbon source.</text>
</comment>
<comment type="similarity">
    <text evidence="1">Belongs to the LutA/YkgE family.</text>
</comment>
<dbReference type="EMBL" id="BA000043">
    <property type="protein sequence ID" value="BAD74680.1"/>
    <property type="molecule type" value="Genomic_DNA"/>
</dbReference>
<dbReference type="RefSeq" id="WP_011229899.1">
    <property type="nucleotide sequence ID" value="NC_006510.1"/>
</dbReference>
<dbReference type="SMR" id="Q5L300"/>
<dbReference type="STRING" id="235909.GK0395"/>
<dbReference type="KEGG" id="gka:GK0395"/>
<dbReference type="PATRIC" id="fig|235909.7.peg.466"/>
<dbReference type="eggNOG" id="COG0247">
    <property type="taxonomic scope" value="Bacteria"/>
</dbReference>
<dbReference type="HOGENOM" id="CLU_023081_1_0_9"/>
<dbReference type="Proteomes" id="UP000001172">
    <property type="component" value="Chromosome"/>
</dbReference>
<dbReference type="GO" id="GO:0005829">
    <property type="term" value="C:cytosol"/>
    <property type="evidence" value="ECO:0007669"/>
    <property type="project" value="TreeGrafter"/>
</dbReference>
<dbReference type="GO" id="GO:0016491">
    <property type="term" value="F:oxidoreductase activity"/>
    <property type="evidence" value="ECO:0007669"/>
    <property type="project" value="UniProtKB-ARBA"/>
</dbReference>
<dbReference type="GO" id="GO:0006089">
    <property type="term" value="P:lactate metabolic process"/>
    <property type="evidence" value="ECO:0007669"/>
    <property type="project" value="UniProtKB-UniRule"/>
</dbReference>
<dbReference type="HAMAP" id="MF_02105">
    <property type="entry name" value="LutA"/>
    <property type="match status" value="1"/>
</dbReference>
<dbReference type="InterPro" id="IPR004017">
    <property type="entry name" value="Cys_rich_dom"/>
</dbReference>
<dbReference type="InterPro" id="IPR022822">
    <property type="entry name" value="LutA"/>
</dbReference>
<dbReference type="PANTHER" id="PTHR30296:SF0">
    <property type="entry name" value="LACTATE UTILIZATION PROTEIN A"/>
    <property type="match status" value="1"/>
</dbReference>
<dbReference type="PANTHER" id="PTHR30296">
    <property type="entry name" value="UNCHARACTERIZED PROTEIN YKGE"/>
    <property type="match status" value="1"/>
</dbReference>
<dbReference type="Pfam" id="PF02754">
    <property type="entry name" value="CCG"/>
    <property type="match status" value="2"/>
</dbReference>
<name>LUTA_GEOKA</name>
<proteinExistence type="inferred from homology"/>
<protein>
    <recommendedName>
        <fullName evidence="1">Lactate utilization protein A</fullName>
    </recommendedName>
</protein>
<accession>Q5L300</accession>